<organism>
    <name type="scientific">Synechococcus sp. (strain ATCC 27144 / PCC 6301 / SAUG 1402/1)</name>
    <name type="common">Anacystis nidulans</name>
    <dbReference type="NCBI Taxonomy" id="269084"/>
    <lineage>
        <taxon>Bacteria</taxon>
        <taxon>Bacillati</taxon>
        <taxon>Cyanobacteriota</taxon>
        <taxon>Cyanophyceae</taxon>
        <taxon>Synechococcales</taxon>
        <taxon>Synechococcaceae</taxon>
        <taxon>Synechococcus</taxon>
    </lineage>
</organism>
<accession>Q5N3E5</accession>
<name>ACP_SYNP6</name>
<evidence type="ECO:0000255" key="1">
    <source>
        <dbReference type="HAMAP-Rule" id="MF_01217"/>
    </source>
</evidence>
<evidence type="ECO:0000255" key="2">
    <source>
        <dbReference type="PROSITE-ProRule" id="PRU00258"/>
    </source>
</evidence>
<sequence>MSQEDIFSKVKDIVAEQLSVDVAEVKPESSFQNDLGADSLDTVELVMALEEAFDIEIPDEAAEGIATVQDAVDFIASKAA</sequence>
<keyword id="KW-0963">Cytoplasm</keyword>
<keyword id="KW-0275">Fatty acid biosynthesis</keyword>
<keyword id="KW-0276">Fatty acid metabolism</keyword>
<keyword id="KW-0444">Lipid biosynthesis</keyword>
<keyword id="KW-0443">Lipid metabolism</keyword>
<keyword id="KW-0596">Phosphopantetheine</keyword>
<keyword id="KW-0597">Phosphoprotein</keyword>
<feature type="chain" id="PRO_1000066706" description="Acyl carrier protein">
    <location>
        <begin position="1"/>
        <end position="80"/>
    </location>
</feature>
<feature type="domain" description="Carrier" evidence="2">
    <location>
        <begin position="4"/>
        <end position="79"/>
    </location>
</feature>
<feature type="modified residue" description="O-(pantetheine 4'-phosphoryl)serine" evidence="2">
    <location>
        <position position="39"/>
    </location>
</feature>
<gene>
    <name evidence="1" type="primary">acpP</name>
    <name type="ordered locus">syc0985_c</name>
</gene>
<protein>
    <recommendedName>
        <fullName evidence="1">Acyl carrier protein</fullName>
        <shortName evidence="1">ACP</shortName>
    </recommendedName>
</protein>
<proteinExistence type="inferred from homology"/>
<dbReference type="EMBL" id="AP008231">
    <property type="protein sequence ID" value="BAD79175.1"/>
    <property type="molecule type" value="Genomic_DNA"/>
</dbReference>
<dbReference type="RefSeq" id="WP_011243297.1">
    <property type="nucleotide sequence ID" value="NZ_CP085785.1"/>
</dbReference>
<dbReference type="SMR" id="Q5N3E5"/>
<dbReference type="GeneID" id="72429359"/>
<dbReference type="KEGG" id="syc:syc0985_c"/>
<dbReference type="eggNOG" id="COG0236">
    <property type="taxonomic scope" value="Bacteria"/>
</dbReference>
<dbReference type="UniPathway" id="UPA00094"/>
<dbReference type="Proteomes" id="UP000001175">
    <property type="component" value="Chromosome"/>
</dbReference>
<dbReference type="GO" id="GO:0005829">
    <property type="term" value="C:cytosol"/>
    <property type="evidence" value="ECO:0007669"/>
    <property type="project" value="TreeGrafter"/>
</dbReference>
<dbReference type="GO" id="GO:0016020">
    <property type="term" value="C:membrane"/>
    <property type="evidence" value="ECO:0007669"/>
    <property type="project" value="GOC"/>
</dbReference>
<dbReference type="GO" id="GO:0000035">
    <property type="term" value="F:acyl binding"/>
    <property type="evidence" value="ECO:0007669"/>
    <property type="project" value="TreeGrafter"/>
</dbReference>
<dbReference type="GO" id="GO:0000036">
    <property type="term" value="F:acyl carrier activity"/>
    <property type="evidence" value="ECO:0007669"/>
    <property type="project" value="UniProtKB-UniRule"/>
</dbReference>
<dbReference type="GO" id="GO:0031177">
    <property type="term" value="F:phosphopantetheine binding"/>
    <property type="evidence" value="ECO:0007669"/>
    <property type="project" value="InterPro"/>
</dbReference>
<dbReference type="GO" id="GO:0009245">
    <property type="term" value="P:lipid A biosynthetic process"/>
    <property type="evidence" value="ECO:0007669"/>
    <property type="project" value="TreeGrafter"/>
</dbReference>
<dbReference type="FunFam" id="1.10.1200.10:FF:000001">
    <property type="entry name" value="Acyl carrier protein"/>
    <property type="match status" value="1"/>
</dbReference>
<dbReference type="Gene3D" id="1.10.1200.10">
    <property type="entry name" value="ACP-like"/>
    <property type="match status" value="1"/>
</dbReference>
<dbReference type="HAMAP" id="MF_01217">
    <property type="entry name" value="Acyl_carrier"/>
    <property type="match status" value="1"/>
</dbReference>
<dbReference type="InterPro" id="IPR003231">
    <property type="entry name" value="ACP"/>
</dbReference>
<dbReference type="InterPro" id="IPR036736">
    <property type="entry name" value="ACP-like_sf"/>
</dbReference>
<dbReference type="InterPro" id="IPR020806">
    <property type="entry name" value="PKS_PP-bd"/>
</dbReference>
<dbReference type="InterPro" id="IPR009081">
    <property type="entry name" value="PP-bd_ACP"/>
</dbReference>
<dbReference type="InterPro" id="IPR006162">
    <property type="entry name" value="Ppantetheine_attach_site"/>
</dbReference>
<dbReference type="NCBIfam" id="TIGR00517">
    <property type="entry name" value="acyl_carrier"/>
    <property type="match status" value="1"/>
</dbReference>
<dbReference type="NCBIfam" id="NF002148">
    <property type="entry name" value="PRK00982.1-2"/>
    <property type="match status" value="1"/>
</dbReference>
<dbReference type="NCBIfam" id="NF002149">
    <property type="entry name" value="PRK00982.1-3"/>
    <property type="match status" value="1"/>
</dbReference>
<dbReference type="NCBIfam" id="NF002150">
    <property type="entry name" value="PRK00982.1-4"/>
    <property type="match status" value="1"/>
</dbReference>
<dbReference type="NCBIfam" id="NF002151">
    <property type="entry name" value="PRK00982.1-5"/>
    <property type="match status" value="1"/>
</dbReference>
<dbReference type="NCBIfam" id="NF009104">
    <property type="entry name" value="PRK12449.1"/>
    <property type="match status" value="1"/>
</dbReference>
<dbReference type="PANTHER" id="PTHR20863">
    <property type="entry name" value="ACYL CARRIER PROTEIN"/>
    <property type="match status" value="1"/>
</dbReference>
<dbReference type="PANTHER" id="PTHR20863:SF76">
    <property type="entry name" value="CARRIER DOMAIN-CONTAINING PROTEIN"/>
    <property type="match status" value="1"/>
</dbReference>
<dbReference type="Pfam" id="PF00550">
    <property type="entry name" value="PP-binding"/>
    <property type="match status" value="1"/>
</dbReference>
<dbReference type="SMART" id="SM00823">
    <property type="entry name" value="PKS_PP"/>
    <property type="match status" value="1"/>
</dbReference>
<dbReference type="SUPFAM" id="SSF47336">
    <property type="entry name" value="ACP-like"/>
    <property type="match status" value="1"/>
</dbReference>
<dbReference type="PROSITE" id="PS50075">
    <property type="entry name" value="CARRIER"/>
    <property type="match status" value="1"/>
</dbReference>
<dbReference type="PROSITE" id="PS00012">
    <property type="entry name" value="PHOSPHOPANTETHEINE"/>
    <property type="match status" value="1"/>
</dbReference>
<comment type="function">
    <text evidence="1">Carrier of the growing fatty acid chain in fatty acid biosynthesis.</text>
</comment>
<comment type="pathway">
    <text evidence="1">Lipid metabolism; fatty acid biosynthesis.</text>
</comment>
<comment type="subcellular location">
    <subcellularLocation>
        <location evidence="1">Cytoplasm</location>
    </subcellularLocation>
</comment>
<comment type="PTM">
    <text evidence="1">4'-phosphopantetheine is transferred from CoA to a specific serine of apo-ACP by AcpS. This modification is essential for activity because fatty acids are bound in thioester linkage to the sulfhydryl of the prosthetic group.</text>
</comment>
<comment type="similarity">
    <text evidence="1">Belongs to the acyl carrier protein (ACP) family.</text>
</comment>
<reference key="1">
    <citation type="journal article" date="2007" name="Photosyn. Res.">
        <title>Complete nucleotide sequence of the freshwater unicellular cyanobacterium Synechococcus elongatus PCC 6301 chromosome: gene content and organization.</title>
        <authorList>
            <person name="Sugita C."/>
            <person name="Ogata K."/>
            <person name="Shikata M."/>
            <person name="Jikuya H."/>
            <person name="Takano J."/>
            <person name="Furumichi M."/>
            <person name="Kanehisa M."/>
            <person name="Omata T."/>
            <person name="Sugiura M."/>
            <person name="Sugita M."/>
        </authorList>
    </citation>
    <scope>NUCLEOTIDE SEQUENCE [LARGE SCALE GENOMIC DNA]</scope>
    <source>
        <strain>ATCC 27144 / PCC 6301 / SAUG 1402/1</strain>
    </source>
</reference>